<feature type="chain" id="PRO_0000182188" description="UDP-N-acetylmuramate--L-alanine ligase">
    <location>
        <begin position="1"/>
        <end position="477"/>
    </location>
</feature>
<feature type="binding site" evidence="1">
    <location>
        <begin position="122"/>
        <end position="128"/>
    </location>
    <ligand>
        <name>ATP</name>
        <dbReference type="ChEBI" id="CHEBI:30616"/>
    </ligand>
</feature>
<comment type="function">
    <text evidence="1">Cell wall formation.</text>
</comment>
<comment type="catalytic activity">
    <reaction evidence="1">
        <text>UDP-N-acetyl-alpha-D-muramate + L-alanine + ATP = UDP-N-acetyl-alpha-D-muramoyl-L-alanine + ADP + phosphate + H(+)</text>
        <dbReference type="Rhea" id="RHEA:23372"/>
        <dbReference type="ChEBI" id="CHEBI:15378"/>
        <dbReference type="ChEBI" id="CHEBI:30616"/>
        <dbReference type="ChEBI" id="CHEBI:43474"/>
        <dbReference type="ChEBI" id="CHEBI:57972"/>
        <dbReference type="ChEBI" id="CHEBI:70757"/>
        <dbReference type="ChEBI" id="CHEBI:83898"/>
        <dbReference type="ChEBI" id="CHEBI:456216"/>
        <dbReference type="EC" id="6.3.2.8"/>
    </reaction>
</comment>
<comment type="pathway">
    <text evidence="1">Cell wall biogenesis; peptidoglycan biosynthesis.</text>
</comment>
<comment type="subcellular location">
    <subcellularLocation>
        <location evidence="1">Cytoplasm</location>
    </subcellularLocation>
</comment>
<comment type="similarity">
    <text evidence="1">Belongs to the MurCDEF family.</text>
</comment>
<sequence>MIRRLQDNGDLIRAFPRVHFVGIGGAGMTGIAEVMLTLGYEVSGSDNADNAATRRLATLGARVMRGHSAANVLGTDCVVVSSAIREDNPELMEARSQRIPIMPRAAMLAELMRFRHGIAVAGTHGKTTTTSLIAAVLSEGGLDPTFVIGGQLLAAGANAKLGAGQWLVVEADESDGSFLRLNPLVAVVTNIDADHLENYGNDFSRIKDAFTEFLQRLPFYGLALLCLDDPEVAELAGKARRHVMTYGIDAAADVRAEDVVQDGARMCFTLCLPEGKVIPVTLALPGRHNVLNALAASAVGWQLGVPPEVIGRALKSFVGIGRRFNDLGDVAIGNGACVRLIDDYGHHPRELEAVFAAVRGGWPDKRLVVAFQPHRYSRTRDQFDAFAAVLSSVDALVLSEVYPAGEVPIPGADAKALARAIRARGRSEPVVVGQVASLIEVLPDVLQEGDLLLMMGAGDIGSIAQRIAHDGFVFGEV</sequence>
<keyword id="KW-0067">ATP-binding</keyword>
<keyword id="KW-0131">Cell cycle</keyword>
<keyword id="KW-0132">Cell division</keyword>
<keyword id="KW-0133">Cell shape</keyword>
<keyword id="KW-0961">Cell wall biogenesis/degradation</keyword>
<keyword id="KW-0963">Cytoplasm</keyword>
<keyword id="KW-0436">Ligase</keyword>
<keyword id="KW-0547">Nucleotide-binding</keyword>
<keyword id="KW-0573">Peptidoglycan synthesis</keyword>
<evidence type="ECO:0000255" key="1">
    <source>
        <dbReference type="HAMAP-Rule" id="MF_00046"/>
    </source>
</evidence>
<reference key="1">
    <citation type="journal article" date="2000" name="Nature">
        <title>The genome sequence of the plant pathogen Xylella fastidiosa.</title>
        <authorList>
            <person name="Simpson A.J.G."/>
            <person name="Reinach F.C."/>
            <person name="Arruda P."/>
            <person name="Abreu F.A."/>
            <person name="Acencio M."/>
            <person name="Alvarenga R."/>
            <person name="Alves L.M.C."/>
            <person name="Araya J.E."/>
            <person name="Baia G.S."/>
            <person name="Baptista C.S."/>
            <person name="Barros M.H."/>
            <person name="Bonaccorsi E.D."/>
            <person name="Bordin S."/>
            <person name="Bove J.M."/>
            <person name="Briones M.R.S."/>
            <person name="Bueno M.R.P."/>
            <person name="Camargo A.A."/>
            <person name="Camargo L.E.A."/>
            <person name="Carraro D.M."/>
            <person name="Carrer H."/>
            <person name="Colauto N.B."/>
            <person name="Colombo C."/>
            <person name="Costa F.F."/>
            <person name="Costa M.C.R."/>
            <person name="Costa-Neto C.M."/>
            <person name="Coutinho L.L."/>
            <person name="Cristofani M."/>
            <person name="Dias-Neto E."/>
            <person name="Docena C."/>
            <person name="El-Dorry H."/>
            <person name="Facincani A.P."/>
            <person name="Ferreira A.J.S."/>
            <person name="Ferreira V.C.A."/>
            <person name="Ferro J.A."/>
            <person name="Fraga J.S."/>
            <person name="Franca S.C."/>
            <person name="Franco M.C."/>
            <person name="Frohme M."/>
            <person name="Furlan L.R."/>
            <person name="Garnier M."/>
            <person name="Goldman G.H."/>
            <person name="Goldman M.H.S."/>
            <person name="Gomes S.L."/>
            <person name="Gruber A."/>
            <person name="Ho P.L."/>
            <person name="Hoheisel J.D."/>
            <person name="Junqueira M.L."/>
            <person name="Kemper E.L."/>
            <person name="Kitajima J.P."/>
            <person name="Krieger J.E."/>
            <person name="Kuramae E.E."/>
            <person name="Laigret F."/>
            <person name="Lambais M.R."/>
            <person name="Leite L.C.C."/>
            <person name="Lemos E.G.M."/>
            <person name="Lemos M.V.F."/>
            <person name="Lopes S.A."/>
            <person name="Lopes C.R."/>
            <person name="Machado J.A."/>
            <person name="Machado M.A."/>
            <person name="Madeira A.M.B.N."/>
            <person name="Madeira H.M.F."/>
            <person name="Marino C.L."/>
            <person name="Marques M.V."/>
            <person name="Martins E.A.L."/>
            <person name="Martins E.M.F."/>
            <person name="Matsukuma A.Y."/>
            <person name="Menck C.F.M."/>
            <person name="Miracca E.C."/>
            <person name="Miyaki C.Y."/>
            <person name="Monteiro-Vitorello C.B."/>
            <person name="Moon D.H."/>
            <person name="Nagai M.A."/>
            <person name="Nascimento A.L.T.O."/>
            <person name="Netto L.E.S."/>
            <person name="Nhani A. Jr."/>
            <person name="Nobrega F.G."/>
            <person name="Nunes L.R."/>
            <person name="Oliveira M.A."/>
            <person name="de Oliveira M.C."/>
            <person name="de Oliveira R.C."/>
            <person name="Palmieri D.A."/>
            <person name="Paris A."/>
            <person name="Peixoto B.R."/>
            <person name="Pereira G.A.G."/>
            <person name="Pereira H.A. Jr."/>
            <person name="Pesquero J.B."/>
            <person name="Quaggio R.B."/>
            <person name="Roberto P.G."/>
            <person name="Rodrigues V."/>
            <person name="de Rosa A.J.M."/>
            <person name="de Rosa V.E. Jr."/>
            <person name="de Sa R.G."/>
            <person name="Santelli R.V."/>
            <person name="Sawasaki H.E."/>
            <person name="da Silva A.C.R."/>
            <person name="da Silva A.M."/>
            <person name="da Silva F.R."/>
            <person name="Silva W.A. Jr."/>
            <person name="da Silveira J.F."/>
            <person name="Silvestri M.L.Z."/>
            <person name="Siqueira W.J."/>
            <person name="de Souza A.A."/>
            <person name="de Souza A.P."/>
            <person name="Terenzi M.F."/>
            <person name="Truffi D."/>
            <person name="Tsai S.M."/>
            <person name="Tsuhako M.H."/>
            <person name="Vallada H."/>
            <person name="Van Sluys M.A."/>
            <person name="Verjovski-Almeida S."/>
            <person name="Vettore A.L."/>
            <person name="Zago M.A."/>
            <person name="Zatz M."/>
            <person name="Meidanis J."/>
            <person name="Setubal J.C."/>
        </authorList>
    </citation>
    <scope>NUCLEOTIDE SEQUENCE [LARGE SCALE GENOMIC DNA]</scope>
    <source>
        <strain>9a5c</strain>
    </source>
</reference>
<accession>Q9PF80</accession>
<protein>
    <recommendedName>
        <fullName evidence="1">UDP-N-acetylmuramate--L-alanine ligase</fullName>
        <ecNumber evidence="1">6.3.2.8</ecNumber>
    </recommendedName>
    <alternativeName>
        <fullName evidence="1">UDP-N-acetylmuramoyl-L-alanine synthetase</fullName>
    </alternativeName>
</protein>
<organism>
    <name type="scientific">Xylella fastidiosa (strain 9a5c)</name>
    <dbReference type="NCBI Taxonomy" id="160492"/>
    <lineage>
        <taxon>Bacteria</taxon>
        <taxon>Pseudomonadati</taxon>
        <taxon>Pseudomonadota</taxon>
        <taxon>Gammaproteobacteria</taxon>
        <taxon>Lysobacterales</taxon>
        <taxon>Lysobacteraceae</taxon>
        <taxon>Xylella</taxon>
    </lineage>
</organism>
<gene>
    <name evidence="1" type="primary">murC</name>
    <name type="ordered locus">XF_0798</name>
</gene>
<dbReference type="EC" id="6.3.2.8" evidence="1"/>
<dbReference type="EMBL" id="AE003849">
    <property type="protein sequence ID" value="AAF83608.1"/>
    <property type="molecule type" value="Genomic_DNA"/>
</dbReference>
<dbReference type="PIR" id="E82763">
    <property type="entry name" value="E82763"/>
</dbReference>
<dbReference type="RefSeq" id="WP_010893319.1">
    <property type="nucleotide sequence ID" value="NC_002488.3"/>
</dbReference>
<dbReference type="SMR" id="Q9PF80"/>
<dbReference type="STRING" id="160492.XF_0798"/>
<dbReference type="KEGG" id="xfa:XF_0798"/>
<dbReference type="PATRIC" id="fig|160492.11.peg.842"/>
<dbReference type="eggNOG" id="COG0773">
    <property type="taxonomic scope" value="Bacteria"/>
</dbReference>
<dbReference type="HOGENOM" id="CLU_028104_2_2_6"/>
<dbReference type="UniPathway" id="UPA00219"/>
<dbReference type="Proteomes" id="UP000000812">
    <property type="component" value="Chromosome"/>
</dbReference>
<dbReference type="GO" id="GO:0005737">
    <property type="term" value="C:cytoplasm"/>
    <property type="evidence" value="ECO:0007669"/>
    <property type="project" value="UniProtKB-SubCell"/>
</dbReference>
<dbReference type="GO" id="GO:0005524">
    <property type="term" value="F:ATP binding"/>
    <property type="evidence" value="ECO:0007669"/>
    <property type="project" value="UniProtKB-UniRule"/>
</dbReference>
<dbReference type="GO" id="GO:0008763">
    <property type="term" value="F:UDP-N-acetylmuramate-L-alanine ligase activity"/>
    <property type="evidence" value="ECO:0007669"/>
    <property type="project" value="UniProtKB-UniRule"/>
</dbReference>
<dbReference type="GO" id="GO:0051301">
    <property type="term" value="P:cell division"/>
    <property type="evidence" value="ECO:0007669"/>
    <property type="project" value="UniProtKB-KW"/>
</dbReference>
<dbReference type="GO" id="GO:0071555">
    <property type="term" value="P:cell wall organization"/>
    <property type="evidence" value="ECO:0007669"/>
    <property type="project" value="UniProtKB-KW"/>
</dbReference>
<dbReference type="GO" id="GO:0009252">
    <property type="term" value="P:peptidoglycan biosynthetic process"/>
    <property type="evidence" value="ECO:0007669"/>
    <property type="project" value="UniProtKB-UniRule"/>
</dbReference>
<dbReference type="GO" id="GO:0008360">
    <property type="term" value="P:regulation of cell shape"/>
    <property type="evidence" value="ECO:0007669"/>
    <property type="project" value="UniProtKB-KW"/>
</dbReference>
<dbReference type="Gene3D" id="3.90.190.20">
    <property type="entry name" value="Mur ligase, C-terminal domain"/>
    <property type="match status" value="1"/>
</dbReference>
<dbReference type="Gene3D" id="3.40.1190.10">
    <property type="entry name" value="Mur-like, catalytic domain"/>
    <property type="match status" value="1"/>
</dbReference>
<dbReference type="Gene3D" id="3.40.50.720">
    <property type="entry name" value="NAD(P)-binding Rossmann-like Domain"/>
    <property type="match status" value="1"/>
</dbReference>
<dbReference type="HAMAP" id="MF_00046">
    <property type="entry name" value="MurC"/>
    <property type="match status" value="1"/>
</dbReference>
<dbReference type="InterPro" id="IPR036565">
    <property type="entry name" value="Mur-like_cat_sf"/>
</dbReference>
<dbReference type="InterPro" id="IPR004101">
    <property type="entry name" value="Mur_ligase_C"/>
</dbReference>
<dbReference type="InterPro" id="IPR036615">
    <property type="entry name" value="Mur_ligase_C_dom_sf"/>
</dbReference>
<dbReference type="InterPro" id="IPR013221">
    <property type="entry name" value="Mur_ligase_cen"/>
</dbReference>
<dbReference type="InterPro" id="IPR000713">
    <property type="entry name" value="Mur_ligase_N"/>
</dbReference>
<dbReference type="InterPro" id="IPR050061">
    <property type="entry name" value="MurCDEF_pg_biosynth"/>
</dbReference>
<dbReference type="InterPro" id="IPR005758">
    <property type="entry name" value="UDP-N-AcMur_Ala_ligase_MurC"/>
</dbReference>
<dbReference type="NCBIfam" id="TIGR01082">
    <property type="entry name" value="murC"/>
    <property type="match status" value="1"/>
</dbReference>
<dbReference type="PANTHER" id="PTHR43445:SF3">
    <property type="entry name" value="UDP-N-ACETYLMURAMATE--L-ALANINE LIGASE"/>
    <property type="match status" value="1"/>
</dbReference>
<dbReference type="PANTHER" id="PTHR43445">
    <property type="entry name" value="UDP-N-ACETYLMURAMATE--L-ALANINE LIGASE-RELATED"/>
    <property type="match status" value="1"/>
</dbReference>
<dbReference type="Pfam" id="PF01225">
    <property type="entry name" value="Mur_ligase"/>
    <property type="match status" value="1"/>
</dbReference>
<dbReference type="Pfam" id="PF02875">
    <property type="entry name" value="Mur_ligase_C"/>
    <property type="match status" value="1"/>
</dbReference>
<dbReference type="Pfam" id="PF08245">
    <property type="entry name" value="Mur_ligase_M"/>
    <property type="match status" value="1"/>
</dbReference>
<dbReference type="SUPFAM" id="SSF51984">
    <property type="entry name" value="MurCD N-terminal domain"/>
    <property type="match status" value="1"/>
</dbReference>
<dbReference type="SUPFAM" id="SSF53623">
    <property type="entry name" value="MurD-like peptide ligases, catalytic domain"/>
    <property type="match status" value="1"/>
</dbReference>
<dbReference type="SUPFAM" id="SSF53244">
    <property type="entry name" value="MurD-like peptide ligases, peptide-binding domain"/>
    <property type="match status" value="1"/>
</dbReference>
<name>MURC_XYLFA</name>
<proteinExistence type="inferred from homology"/>